<name>GSA_THISH</name>
<sequence>MTRSHDLFKAAQRHIPGGVNSPVRAFKGVGGDPVFIQRAEGAYMYDADGKRYIDYVGSWGPMIAGHAHPEVVEAVREAARGGLSFGAPTEIEIRMAERVCELVPSMDMVRMVSSGTEATMSAIRLARGFTGRDKIIKFEGCYHGHGDSLLVKAGSGALTLGVPSSPGVPAALAEHTLTLTYNDLDEVRETLAHVGGQVACIIVEPVAGNMNCIPPVPGFLEGLRELCDEYGALLIFDEVMTGFRVALGGAQAHYGVKPDLTTLGKIIGGGMPVGAFGGRREVMEQLAPLGPVYQAGTLSGNPVAMAAGLKTLEIISRPGFYDELTRKTRVMVDGVLTAAGEAGIPMTANQVGGMFGLFFSEQPVTNFYQATQCDLDRFRLFFHEMLERGVYLAPSAYEAGFVSSAHSEADLAETIEAAARSLREVSGN</sequence>
<organism>
    <name type="scientific">Thioalkalivibrio sulfidiphilus (strain HL-EbGR7)</name>
    <dbReference type="NCBI Taxonomy" id="396588"/>
    <lineage>
        <taxon>Bacteria</taxon>
        <taxon>Pseudomonadati</taxon>
        <taxon>Pseudomonadota</taxon>
        <taxon>Gammaproteobacteria</taxon>
        <taxon>Chromatiales</taxon>
        <taxon>Ectothiorhodospiraceae</taxon>
        <taxon>Thioalkalivibrio</taxon>
    </lineage>
</organism>
<protein>
    <recommendedName>
        <fullName evidence="1">Glutamate-1-semialdehyde 2,1-aminomutase</fullName>
        <shortName evidence="1">GSA</shortName>
        <ecNumber evidence="1">5.4.3.8</ecNumber>
    </recommendedName>
    <alternativeName>
        <fullName evidence="1">Glutamate-1-semialdehyde aminotransferase</fullName>
        <shortName evidence="1">GSA-AT</shortName>
    </alternativeName>
</protein>
<gene>
    <name evidence="1" type="primary">hemL</name>
    <name type="ordered locus">Tgr7_2421</name>
</gene>
<keyword id="KW-0963">Cytoplasm</keyword>
<keyword id="KW-0413">Isomerase</keyword>
<keyword id="KW-0627">Porphyrin biosynthesis</keyword>
<keyword id="KW-0663">Pyridoxal phosphate</keyword>
<keyword id="KW-1185">Reference proteome</keyword>
<reference key="1">
    <citation type="journal article" date="2011" name="Stand. Genomic Sci.">
        <title>Complete genome sequence of 'Thioalkalivibrio sulfidophilus' HL-EbGr7.</title>
        <authorList>
            <person name="Muyzer G."/>
            <person name="Sorokin D.Y."/>
            <person name="Mavromatis K."/>
            <person name="Lapidus A."/>
            <person name="Clum A."/>
            <person name="Ivanova N."/>
            <person name="Pati A."/>
            <person name="d'Haeseleer P."/>
            <person name="Woyke T."/>
            <person name="Kyrpides N.C."/>
        </authorList>
    </citation>
    <scope>NUCLEOTIDE SEQUENCE [LARGE SCALE GENOMIC DNA]</scope>
    <source>
        <strain>HL-EbGR7</strain>
    </source>
</reference>
<accession>B8GLE4</accession>
<evidence type="ECO:0000255" key="1">
    <source>
        <dbReference type="HAMAP-Rule" id="MF_00375"/>
    </source>
</evidence>
<feature type="chain" id="PRO_1000201037" description="Glutamate-1-semialdehyde 2,1-aminomutase">
    <location>
        <begin position="1"/>
        <end position="428"/>
    </location>
</feature>
<feature type="modified residue" description="N6-(pyridoxal phosphate)lysine" evidence="1">
    <location>
        <position position="265"/>
    </location>
</feature>
<dbReference type="EC" id="5.4.3.8" evidence="1"/>
<dbReference type="EMBL" id="CP001339">
    <property type="protein sequence ID" value="ACL73499.1"/>
    <property type="molecule type" value="Genomic_DNA"/>
</dbReference>
<dbReference type="RefSeq" id="WP_012638974.1">
    <property type="nucleotide sequence ID" value="NC_011901.1"/>
</dbReference>
<dbReference type="SMR" id="B8GLE4"/>
<dbReference type="STRING" id="396588.Tgr7_2421"/>
<dbReference type="KEGG" id="tgr:Tgr7_2421"/>
<dbReference type="eggNOG" id="COG0001">
    <property type="taxonomic scope" value="Bacteria"/>
</dbReference>
<dbReference type="HOGENOM" id="CLU_016922_1_5_6"/>
<dbReference type="OrthoDB" id="9770449at2"/>
<dbReference type="UniPathway" id="UPA00251">
    <property type="reaction ID" value="UER00317"/>
</dbReference>
<dbReference type="Proteomes" id="UP000002383">
    <property type="component" value="Chromosome"/>
</dbReference>
<dbReference type="GO" id="GO:0005737">
    <property type="term" value="C:cytoplasm"/>
    <property type="evidence" value="ECO:0007669"/>
    <property type="project" value="UniProtKB-SubCell"/>
</dbReference>
<dbReference type="GO" id="GO:0042286">
    <property type="term" value="F:glutamate-1-semialdehyde 2,1-aminomutase activity"/>
    <property type="evidence" value="ECO:0007669"/>
    <property type="project" value="UniProtKB-UniRule"/>
</dbReference>
<dbReference type="GO" id="GO:0030170">
    <property type="term" value="F:pyridoxal phosphate binding"/>
    <property type="evidence" value="ECO:0007669"/>
    <property type="project" value="InterPro"/>
</dbReference>
<dbReference type="GO" id="GO:0008483">
    <property type="term" value="F:transaminase activity"/>
    <property type="evidence" value="ECO:0007669"/>
    <property type="project" value="InterPro"/>
</dbReference>
<dbReference type="GO" id="GO:0006782">
    <property type="term" value="P:protoporphyrinogen IX biosynthetic process"/>
    <property type="evidence" value="ECO:0007669"/>
    <property type="project" value="UniProtKB-UniRule"/>
</dbReference>
<dbReference type="CDD" id="cd00610">
    <property type="entry name" value="OAT_like"/>
    <property type="match status" value="1"/>
</dbReference>
<dbReference type="FunFam" id="3.40.640.10:FF:000021">
    <property type="entry name" value="Glutamate-1-semialdehyde 2,1-aminomutase"/>
    <property type="match status" value="1"/>
</dbReference>
<dbReference type="Gene3D" id="3.90.1150.10">
    <property type="entry name" value="Aspartate Aminotransferase, domain 1"/>
    <property type="match status" value="1"/>
</dbReference>
<dbReference type="Gene3D" id="3.40.640.10">
    <property type="entry name" value="Type I PLP-dependent aspartate aminotransferase-like (Major domain)"/>
    <property type="match status" value="1"/>
</dbReference>
<dbReference type="HAMAP" id="MF_00375">
    <property type="entry name" value="HemL_aminotrans_3"/>
    <property type="match status" value="1"/>
</dbReference>
<dbReference type="InterPro" id="IPR004639">
    <property type="entry name" value="4pyrrol_synth_GluAld_NH2Trfase"/>
</dbReference>
<dbReference type="InterPro" id="IPR005814">
    <property type="entry name" value="Aminotrans_3"/>
</dbReference>
<dbReference type="InterPro" id="IPR049704">
    <property type="entry name" value="Aminotrans_3_PPA_site"/>
</dbReference>
<dbReference type="InterPro" id="IPR015424">
    <property type="entry name" value="PyrdxlP-dep_Trfase"/>
</dbReference>
<dbReference type="InterPro" id="IPR015421">
    <property type="entry name" value="PyrdxlP-dep_Trfase_major"/>
</dbReference>
<dbReference type="InterPro" id="IPR015422">
    <property type="entry name" value="PyrdxlP-dep_Trfase_small"/>
</dbReference>
<dbReference type="NCBIfam" id="TIGR00713">
    <property type="entry name" value="hemL"/>
    <property type="match status" value="1"/>
</dbReference>
<dbReference type="NCBIfam" id="NF000818">
    <property type="entry name" value="PRK00062.1"/>
    <property type="match status" value="1"/>
</dbReference>
<dbReference type="PANTHER" id="PTHR43713">
    <property type="entry name" value="GLUTAMATE-1-SEMIALDEHYDE 2,1-AMINOMUTASE"/>
    <property type="match status" value="1"/>
</dbReference>
<dbReference type="PANTHER" id="PTHR43713:SF3">
    <property type="entry name" value="GLUTAMATE-1-SEMIALDEHYDE 2,1-AMINOMUTASE 1, CHLOROPLASTIC-RELATED"/>
    <property type="match status" value="1"/>
</dbReference>
<dbReference type="Pfam" id="PF00202">
    <property type="entry name" value="Aminotran_3"/>
    <property type="match status" value="1"/>
</dbReference>
<dbReference type="SUPFAM" id="SSF53383">
    <property type="entry name" value="PLP-dependent transferases"/>
    <property type="match status" value="1"/>
</dbReference>
<dbReference type="PROSITE" id="PS00600">
    <property type="entry name" value="AA_TRANSFER_CLASS_3"/>
    <property type="match status" value="1"/>
</dbReference>
<proteinExistence type="inferred from homology"/>
<comment type="catalytic activity">
    <reaction evidence="1">
        <text>(S)-4-amino-5-oxopentanoate = 5-aminolevulinate</text>
        <dbReference type="Rhea" id="RHEA:14265"/>
        <dbReference type="ChEBI" id="CHEBI:57501"/>
        <dbReference type="ChEBI" id="CHEBI:356416"/>
        <dbReference type="EC" id="5.4.3.8"/>
    </reaction>
</comment>
<comment type="cofactor">
    <cofactor evidence="1">
        <name>pyridoxal 5'-phosphate</name>
        <dbReference type="ChEBI" id="CHEBI:597326"/>
    </cofactor>
</comment>
<comment type="pathway">
    <text evidence="1">Porphyrin-containing compound metabolism; protoporphyrin-IX biosynthesis; 5-aminolevulinate from L-glutamyl-tRNA(Glu): step 2/2.</text>
</comment>
<comment type="subunit">
    <text evidence="1">Homodimer.</text>
</comment>
<comment type="subcellular location">
    <subcellularLocation>
        <location evidence="1">Cytoplasm</location>
    </subcellularLocation>
</comment>
<comment type="similarity">
    <text evidence="1">Belongs to the class-III pyridoxal-phosphate-dependent aminotransferase family. HemL subfamily.</text>
</comment>